<gene>
    <name type="primary">isdE</name>
    <name type="synonym">sirF</name>
    <name type="ordered locus">SACOL1143</name>
</gene>
<feature type="signal peptide" evidence="2">
    <location>
        <begin position="1"/>
        <end position="19"/>
    </location>
</feature>
<feature type="chain" id="PRO_0000326208" description="High-affinity heme uptake system protein IsdE">
    <location>
        <begin position="20"/>
        <end position="292"/>
    </location>
</feature>
<feature type="domain" description="Fe/B12 periplasmic-binding" evidence="3">
    <location>
        <begin position="35"/>
        <end position="291"/>
    </location>
</feature>
<feature type="binding site" evidence="1">
    <location>
        <position position="41"/>
    </location>
    <ligand>
        <name>heme</name>
        <dbReference type="ChEBI" id="CHEBI:30413"/>
    </ligand>
</feature>
<feature type="binding site" evidence="1">
    <location>
        <position position="42"/>
    </location>
    <ligand>
        <name>heme</name>
        <dbReference type="ChEBI" id="CHEBI:30413"/>
    </ligand>
</feature>
<feature type="binding site" evidence="1">
    <location>
        <position position="60"/>
    </location>
    <ligand>
        <name>heme</name>
        <dbReference type="ChEBI" id="CHEBI:30413"/>
    </ligand>
</feature>
<feature type="binding site" evidence="1">
    <location>
        <position position="61"/>
    </location>
    <ligand>
        <name>heme</name>
        <dbReference type="ChEBI" id="CHEBI:30413"/>
    </ligand>
</feature>
<feature type="binding site" description="axial binding residue" evidence="1">
    <location>
        <position position="78"/>
    </location>
    <ligand>
        <name>heme</name>
        <dbReference type="ChEBI" id="CHEBI:30413"/>
    </ligand>
    <ligandPart>
        <name>Fe</name>
        <dbReference type="ChEBI" id="CHEBI:18248"/>
    </ligandPart>
</feature>
<feature type="binding site" description="axial binding residue" evidence="1">
    <location>
        <position position="229"/>
    </location>
    <ligand>
        <name>heme</name>
        <dbReference type="ChEBI" id="CHEBI:30413"/>
    </ligand>
    <ligandPart>
        <name>Fe</name>
        <dbReference type="ChEBI" id="CHEBI:18248"/>
    </ligandPart>
</feature>
<feature type="lipid moiety-binding region" description="N-palmitoyl cysteine" evidence="2">
    <location>
        <position position="20"/>
    </location>
</feature>
<feature type="lipid moiety-binding region" description="S-diacylglycerol cysteine" evidence="2">
    <location>
        <position position="20"/>
    </location>
</feature>
<organism>
    <name type="scientific">Staphylococcus aureus (strain COL)</name>
    <dbReference type="NCBI Taxonomy" id="93062"/>
    <lineage>
        <taxon>Bacteria</taxon>
        <taxon>Bacillati</taxon>
        <taxon>Bacillota</taxon>
        <taxon>Bacilli</taxon>
        <taxon>Bacillales</taxon>
        <taxon>Staphylococcaceae</taxon>
        <taxon>Staphylococcus</taxon>
    </lineage>
</organism>
<evidence type="ECO:0000250" key="1"/>
<evidence type="ECO:0000255" key="2">
    <source>
        <dbReference type="PROSITE-ProRule" id="PRU00303"/>
    </source>
</evidence>
<evidence type="ECO:0000255" key="3">
    <source>
        <dbReference type="PROSITE-ProRule" id="PRU00344"/>
    </source>
</evidence>
<evidence type="ECO:0000305" key="4"/>
<keyword id="KW-1003">Cell membrane</keyword>
<keyword id="KW-0349">Heme</keyword>
<keyword id="KW-0408">Iron</keyword>
<keyword id="KW-0449">Lipoprotein</keyword>
<keyword id="KW-0472">Membrane</keyword>
<keyword id="KW-0479">Metal-binding</keyword>
<keyword id="KW-0564">Palmitate</keyword>
<keyword id="KW-0732">Signal</keyword>
<keyword id="KW-0813">Transport</keyword>
<comment type="function">
    <text evidence="1">Involved in heme (porphyrin) scavenging. Binds Fe(2+) and Fe(3+) heme but the largest fraction is Fe(2+) heme. Functions as a high-affinity heme binding protein and probably has a role in relaying heme-iron from cell wall-anchored isd proteins receptors to the probable permease IsdF (By similarity).</text>
</comment>
<comment type="cofactor">
    <cofactor evidence="1">
        <name>heme b</name>
        <dbReference type="ChEBI" id="CHEBI:60344"/>
    </cofactor>
    <text evidence="1">Binds 1 heme b (iron(II)-protoporphyrin IX) group per subunit.</text>
</comment>
<comment type="subcellular location">
    <subcellularLocation>
        <location evidence="2">Cell membrane</location>
        <topology evidence="2">Lipid-anchor</topology>
    </subcellularLocation>
</comment>
<comment type="induction">
    <text evidence="1">Repressed by fur in the presence of iron.</text>
</comment>
<comment type="similarity">
    <text evidence="4">Belongs to the bacterial solute-binding protein 8 family.</text>
</comment>
<sequence length="292" mass="33271">MRIIKYLTILVISVVILTSCQSSSSQESTKSGEFRIVPTTVALTMTLDKLDLPIVGKPTSYKTLPNRYKDVPEIGQPMEPNVEAVKKLKPTHVLSVSTIKDEMQPFYKQLNMKGYFYDFDSLKGMQKSITQLGDQFNRKAQAKELNDHLNSVKQKIENKAAKQKKHPKVLILMGVPGSYLVATDKSYIGDLVKIAGGENVIKVKDRQYISSNTENLLNINPDIILRLPHGMPEEVKKMFQKEFKQNDIWKHFKAVKNNHVYDLEEVPFGITANVDADKAMTQLYDLFYKDKK</sequence>
<proteinExistence type="inferred from homology"/>
<protein>
    <recommendedName>
        <fullName>High-affinity heme uptake system protein IsdE</fullName>
    </recommendedName>
    <alternativeName>
        <fullName>Iron-regulated surface determinant protein E</fullName>
    </alternativeName>
    <alternativeName>
        <fullName>Staphylococcal iron-regulated protein F</fullName>
    </alternativeName>
</protein>
<accession>Q5HGV1</accession>
<dbReference type="EMBL" id="CP000046">
    <property type="protein sequence ID" value="AAW38022.1"/>
    <property type="molecule type" value="Genomic_DNA"/>
</dbReference>
<dbReference type="RefSeq" id="WP_001220199.1">
    <property type="nucleotide sequence ID" value="NZ_JBGOFO010000002.1"/>
</dbReference>
<dbReference type="SMR" id="Q5HGV1"/>
<dbReference type="KEGG" id="sac:SACOL1143"/>
<dbReference type="HOGENOM" id="CLU_038034_2_3_9"/>
<dbReference type="Proteomes" id="UP000000530">
    <property type="component" value="Chromosome"/>
</dbReference>
<dbReference type="GO" id="GO:0005886">
    <property type="term" value="C:plasma membrane"/>
    <property type="evidence" value="ECO:0007669"/>
    <property type="project" value="UniProtKB-SubCell"/>
</dbReference>
<dbReference type="GO" id="GO:0020037">
    <property type="term" value="F:heme binding"/>
    <property type="evidence" value="ECO:0007669"/>
    <property type="project" value="InterPro"/>
</dbReference>
<dbReference type="GO" id="GO:0046872">
    <property type="term" value="F:metal ion binding"/>
    <property type="evidence" value="ECO:0007669"/>
    <property type="project" value="UniProtKB-KW"/>
</dbReference>
<dbReference type="GO" id="GO:0071281">
    <property type="term" value="P:cellular response to iron ion"/>
    <property type="evidence" value="ECO:0007669"/>
    <property type="project" value="TreeGrafter"/>
</dbReference>
<dbReference type="GO" id="GO:0015886">
    <property type="term" value="P:heme transport"/>
    <property type="evidence" value="ECO:0007669"/>
    <property type="project" value="InterPro"/>
</dbReference>
<dbReference type="FunFam" id="3.40.50.1980:FF:000022">
    <property type="entry name" value="Heme ABC transporter substrate-binding protein IsdE"/>
    <property type="match status" value="1"/>
</dbReference>
<dbReference type="FunFam" id="3.40.50.1980:FF:000031">
    <property type="entry name" value="High-affinity heme uptake system protein IsdE"/>
    <property type="match status" value="1"/>
</dbReference>
<dbReference type="Gene3D" id="3.40.50.1980">
    <property type="entry name" value="Nitrogenase molybdenum iron protein domain"/>
    <property type="match status" value="2"/>
</dbReference>
<dbReference type="InterPro" id="IPR050902">
    <property type="entry name" value="ABC_Transporter_SBP"/>
</dbReference>
<dbReference type="InterPro" id="IPR019957">
    <property type="entry name" value="ABC_transptr_haem-bd_IsdE"/>
</dbReference>
<dbReference type="InterPro" id="IPR002491">
    <property type="entry name" value="ABC_transptr_periplasmic_BD"/>
</dbReference>
<dbReference type="NCBIfam" id="TIGR03659">
    <property type="entry name" value="IsdE"/>
    <property type="match status" value="1"/>
</dbReference>
<dbReference type="PANTHER" id="PTHR30535:SF36">
    <property type="entry name" value="HIGH-AFFINITY HEME UPTAKE SYSTEM PROTEIN ISDE"/>
    <property type="match status" value="1"/>
</dbReference>
<dbReference type="PANTHER" id="PTHR30535">
    <property type="entry name" value="VITAMIN B12-BINDING PROTEIN"/>
    <property type="match status" value="1"/>
</dbReference>
<dbReference type="Pfam" id="PF01497">
    <property type="entry name" value="Peripla_BP_2"/>
    <property type="match status" value="1"/>
</dbReference>
<dbReference type="SUPFAM" id="SSF53807">
    <property type="entry name" value="Helical backbone' metal receptor"/>
    <property type="match status" value="1"/>
</dbReference>
<dbReference type="PROSITE" id="PS50983">
    <property type="entry name" value="FE_B12_PBP"/>
    <property type="match status" value="1"/>
</dbReference>
<dbReference type="PROSITE" id="PS51257">
    <property type="entry name" value="PROKAR_LIPOPROTEIN"/>
    <property type="match status" value="1"/>
</dbReference>
<reference key="1">
    <citation type="journal article" date="2005" name="J. Bacteriol.">
        <title>Insights on evolution of virulence and resistance from the complete genome analysis of an early methicillin-resistant Staphylococcus aureus strain and a biofilm-producing methicillin-resistant Staphylococcus epidermidis strain.</title>
        <authorList>
            <person name="Gill S.R."/>
            <person name="Fouts D.E."/>
            <person name="Archer G.L."/>
            <person name="Mongodin E.F."/>
            <person name="DeBoy R.T."/>
            <person name="Ravel J."/>
            <person name="Paulsen I.T."/>
            <person name="Kolonay J.F."/>
            <person name="Brinkac L.M."/>
            <person name="Beanan M.J."/>
            <person name="Dodson R.J."/>
            <person name="Daugherty S.C."/>
            <person name="Madupu R."/>
            <person name="Angiuoli S.V."/>
            <person name="Durkin A.S."/>
            <person name="Haft D.H."/>
            <person name="Vamathevan J.J."/>
            <person name="Khouri H."/>
            <person name="Utterback T.R."/>
            <person name="Lee C."/>
            <person name="Dimitrov G."/>
            <person name="Jiang L."/>
            <person name="Qin H."/>
            <person name="Weidman J."/>
            <person name="Tran K."/>
            <person name="Kang K.H."/>
            <person name="Hance I.R."/>
            <person name="Nelson K.E."/>
            <person name="Fraser C.M."/>
        </authorList>
    </citation>
    <scope>NUCLEOTIDE SEQUENCE [LARGE SCALE GENOMIC DNA]</scope>
    <source>
        <strain>COL</strain>
    </source>
</reference>
<name>ISDE_STAAC</name>